<evidence type="ECO:0000250" key="1"/>
<evidence type="ECO:0000305" key="2"/>
<reference key="1">
    <citation type="journal article" date="2000" name="Mar. Environ. Res.">
        <title>The cytochrome P450 1A gene (CYP1A) from European flounder (Platichthys flesus), analysis of regulatory regions and development of a dual luciferase reporter gene system.</title>
        <authorList>
            <person name="Williams T.D."/>
            <person name="Lee J.S."/>
            <person name="Sheader D.L."/>
            <person name="Chipman J.K."/>
        </authorList>
    </citation>
    <scope>NUCLEOTIDE SEQUENCE [GENOMIC DNA]</scope>
    <source>
        <strain>North Sea population</strain>
        <tissue>Liver</tissue>
    </source>
</reference>
<name>CP1A1_PLAFE</name>
<keyword id="KW-0256">Endoplasmic reticulum</keyword>
<keyword id="KW-0349">Heme</keyword>
<keyword id="KW-0408">Iron</keyword>
<keyword id="KW-0472">Membrane</keyword>
<keyword id="KW-0479">Metal-binding</keyword>
<keyword id="KW-0492">Microsome</keyword>
<keyword id="KW-0503">Monooxygenase</keyword>
<keyword id="KW-0560">Oxidoreductase</keyword>
<sequence>MMLMMLPFIGSVSVSESLVAMTTMCLVYLILKFFQTEIPEGLLRLPGPKPLPIIGNVLGLGSKPYLSLTDMSKRYGHVFQIQIGMRPVVVLSGSETVRQALIKQGDDFAGRPDLYSFRFINAGKSLAFSTDQAGVWRARRKLAYSALRSFSNLEGTTPEYSCVLEEHICKEGEYLIKQLNTVMKADGSFDPFRHIVVSVANVICGMCFGRRYDHDDQELVGLVTLSDEFGRVVGSGNPADFIPILQYLPSAAMKNFLRINSRFTEFVQKIVTEHYTTFDKDNIRDITDSLIDHCEDRKLDENSNVQMSDEKIVGIVNDLFGAGFDTVSTALSWSVMYLVAHPEIQERLYQEIEDKVGLDRMPLLSDKPNLPFLEAFILEILRHSSFLPFTIPHCTTKDTSLNGYFIPKDTCVFINQWQINHDPELWKDPSSFNPDRFLSADGSEVNKLDGEKVMAFGMGKRRCIGEVIARNEVYLFLAIIIQKLHFLPIPGEKLDMTPEYGLTMKHKRCHLKATMRARNEH</sequence>
<comment type="function">
    <text>Cytochromes P450 are a group of heme-thiolate monooxygenases. They oxidize a variety of structurally unrelated compounds, including steroids, fatty acids, and xenobiotics.</text>
</comment>
<comment type="catalytic activity">
    <reaction>
        <text>an organic molecule + reduced [NADPH--hemoprotein reductase] + O2 = an alcohol + oxidized [NADPH--hemoprotein reductase] + H2O + H(+)</text>
        <dbReference type="Rhea" id="RHEA:17149"/>
        <dbReference type="Rhea" id="RHEA-COMP:11964"/>
        <dbReference type="Rhea" id="RHEA-COMP:11965"/>
        <dbReference type="ChEBI" id="CHEBI:15377"/>
        <dbReference type="ChEBI" id="CHEBI:15378"/>
        <dbReference type="ChEBI" id="CHEBI:15379"/>
        <dbReference type="ChEBI" id="CHEBI:30879"/>
        <dbReference type="ChEBI" id="CHEBI:57618"/>
        <dbReference type="ChEBI" id="CHEBI:58210"/>
        <dbReference type="ChEBI" id="CHEBI:142491"/>
        <dbReference type="EC" id="1.14.14.1"/>
    </reaction>
</comment>
<comment type="cofactor">
    <cofactor evidence="1">
        <name>heme</name>
        <dbReference type="ChEBI" id="CHEBI:30413"/>
    </cofactor>
</comment>
<comment type="subcellular location">
    <subcellularLocation>
        <location>Endoplasmic reticulum membrane</location>
        <topology>Peripheral membrane protein</topology>
    </subcellularLocation>
    <subcellularLocation>
        <location>Microsome membrane</location>
        <topology>Peripheral membrane protein</topology>
    </subcellularLocation>
</comment>
<comment type="similarity">
    <text evidence="2">Belongs to the cytochrome P450 family.</text>
</comment>
<feature type="chain" id="PRO_0000051636" description="Cytochrome P450 1A1">
    <location>
        <begin position="1"/>
        <end position="521"/>
    </location>
</feature>
<feature type="binding site" evidence="1">
    <location>
        <position position="229"/>
    </location>
    <ligand>
        <name>substrate</name>
    </ligand>
</feature>
<feature type="binding site" description="axial binding residue" evidence="1">
    <location>
        <position position="463"/>
    </location>
    <ligand>
        <name>heme</name>
        <dbReference type="ChEBI" id="CHEBI:30413"/>
    </ligand>
    <ligandPart>
        <name>Fe</name>
        <dbReference type="ChEBI" id="CHEBI:18248"/>
    </ligandPart>
</feature>
<protein>
    <recommendedName>
        <fullName>Cytochrome P450 1A1</fullName>
        <ecNumber>1.14.14.1</ecNumber>
    </recommendedName>
    <alternativeName>
        <fullName>CYPIA1</fullName>
    </alternativeName>
</protein>
<proteinExistence type="inferred from homology"/>
<dbReference type="EC" id="1.14.14.1"/>
<dbReference type="EMBL" id="AJ132353">
    <property type="protein sequence ID" value="CAA10645.1"/>
    <property type="molecule type" value="Genomic_DNA"/>
</dbReference>
<dbReference type="SMR" id="Q9YH64"/>
<dbReference type="GO" id="GO:0005789">
    <property type="term" value="C:endoplasmic reticulum membrane"/>
    <property type="evidence" value="ECO:0007669"/>
    <property type="project" value="UniProtKB-SubCell"/>
</dbReference>
<dbReference type="GO" id="GO:0020037">
    <property type="term" value="F:heme binding"/>
    <property type="evidence" value="ECO:0007669"/>
    <property type="project" value="InterPro"/>
</dbReference>
<dbReference type="GO" id="GO:0005506">
    <property type="term" value="F:iron ion binding"/>
    <property type="evidence" value="ECO:0007669"/>
    <property type="project" value="InterPro"/>
</dbReference>
<dbReference type="GO" id="GO:0004508">
    <property type="term" value="F:steroid 17-alpha-monooxygenase activity"/>
    <property type="evidence" value="ECO:0007669"/>
    <property type="project" value="TreeGrafter"/>
</dbReference>
<dbReference type="GO" id="GO:0042446">
    <property type="term" value="P:hormone biosynthetic process"/>
    <property type="evidence" value="ECO:0007669"/>
    <property type="project" value="TreeGrafter"/>
</dbReference>
<dbReference type="GO" id="GO:0042448">
    <property type="term" value="P:progesterone metabolic process"/>
    <property type="evidence" value="ECO:0007669"/>
    <property type="project" value="TreeGrafter"/>
</dbReference>
<dbReference type="CDD" id="cd20676">
    <property type="entry name" value="CYP1A"/>
    <property type="match status" value="1"/>
</dbReference>
<dbReference type="FunFam" id="1.10.630.10:FF:000002">
    <property type="entry name" value="Cytochrome P450 1A1"/>
    <property type="match status" value="1"/>
</dbReference>
<dbReference type="Gene3D" id="1.10.630.10">
    <property type="entry name" value="Cytochrome P450"/>
    <property type="match status" value="1"/>
</dbReference>
<dbReference type="InterPro" id="IPR001128">
    <property type="entry name" value="Cyt_P450"/>
</dbReference>
<dbReference type="InterPro" id="IPR017972">
    <property type="entry name" value="Cyt_P450_CS"/>
</dbReference>
<dbReference type="InterPro" id="IPR002401">
    <property type="entry name" value="Cyt_P450_E_grp-I"/>
</dbReference>
<dbReference type="InterPro" id="IPR008066">
    <property type="entry name" value="Cyt_P450_E_grp-I_CYP1"/>
</dbReference>
<dbReference type="InterPro" id="IPR036396">
    <property type="entry name" value="Cyt_P450_sf"/>
</dbReference>
<dbReference type="PANTHER" id="PTHR24289:SF21">
    <property type="entry name" value="CYTOCHROME P450 1A"/>
    <property type="match status" value="1"/>
</dbReference>
<dbReference type="PANTHER" id="PTHR24289">
    <property type="entry name" value="STEROID 17-ALPHA-HYDROXYLASE/17,20 LYASE"/>
    <property type="match status" value="1"/>
</dbReference>
<dbReference type="Pfam" id="PF00067">
    <property type="entry name" value="p450"/>
    <property type="match status" value="1"/>
</dbReference>
<dbReference type="PRINTS" id="PR00463">
    <property type="entry name" value="EP450I"/>
</dbReference>
<dbReference type="PRINTS" id="PR01683">
    <property type="entry name" value="EP450ICYP1A"/>
</dbReference>
<dbReference type="PRINTS" id="PR00385">
    <property type="entry name" value="P450"/>
</dbReference>
<dbReference type="SUPFAM" id="SSF48264">
    <property type="entry name" value="Cytochrome P450"/>
    <property type="match status" value="1"/>
</dbReference>
<dbReference type="PROSITE" id="PS00086">
    <property type="entry name" value="CYTOCHROME_P450"/>
    <property type="match status" value="1"/>
</dbReference>
<organism>
    <name type="scientific">Platichthys flesus</name>
    <name type="common">European flounder</name>
    <name type="synonym">Pleuronectes flesus</name>
    <dbReference type="NCBI Taxonomy" id="8260"/>
    <lineage>
        <taxon>Eukaryota</taxon>
        <taxon>Metazoa</taxon>
        <taxon>Chordata</taxon>
        <taxon>Craniata</taxon>
        <taxon>Vertebrata</taxon>
        <taxon>Euteleostomi</taxon>
        <taxon>Actinopterygii</taxon>
        <taxon>Neopterygii</taxon>
        <taxon>Teleostei</taxon>
        <taxon>Neoteleostei</taxon>
        <taxon>Acanthomorphata</taxon>
        <taxon>Carangaria</taxon>
        <taxon>Pleuronectiformes</taxon>
        <taxon>Pleuronectoidei</taxon>
        <taxon>Pleuronectidae</taxon>
        <taxon>Platichthys</taxon>
    </lineage>
</organism>
<accession>Q9YH64</accession>
<gene>
    <name type="primary">cyp1a1</name>
    <name type="synonym">cyp1a</name>
</gene>